<reference key="1">
    <citation type="journal article" date="2007" name="PLoS Biol.">
        <title>Evolution of symbiotic bacteria in the distal human intestine.</title>
        <authorList>
            <person name="Xu J."/>
            <person name="Mahowald M.A."/>
            <person name="Ley R.E."/>
            <person name="Lozupone C.A."/>
            <person name="Hamady M."/>
            <person name="Martens E.C."/>
            <person name="Henrissat B."/>
            <person name="Coutinho P.M."/>
            <person name="Minx P."/>
            <person name="Latreille P."/>
            <person name="Cordum H."/>
            <person name="Van Brunt A."/>
            <person name="Kim K."/>
            <person name="Fulton R.S."/>
            <person name="Fulton L.A."/>
            <person name="Clifton S.W."/>
            <person name="Wilson R.K."/>
            <person name="Knight R.D."/>
            <person name="Gordon J.I."/>
        </authorList>
    </citation>
    <scope>NUCLEOTIDE SEQUENCE [LARGE SCALE GENOMIC DNA]</scope>
    <source>
        <strain>ATCC 8503 / DSM 20701 / CIP 104284 / JCM 5825 / NCTC 11152</strain>
    </source>
</reference>
<gene>
    <name evidence="1" type="primary">thyA</name>
    <name type="ordered locus">BDI_3749</name>
</gene>
<feature type="chain" id="PRO_1000000646" description="Thymidylate synthase">
    <location>
        <begin position="1"/>
        <end position="264"/>
    </location>
</feature>
<feature type="active site" description="Nucleophile" evidence="1">
    <location>
        <position position="146"/>
    </location>
</feature>
<feature type="binding site" description="in other chain" evidence="1">
    <location>
        <position position="21"/>
    </location>
    <ligand>
        <name>dUMP</name>
        <dbReference type="ChEBI" id="CHEBI:246422"/>
        <note>ligand shared between dimeric partners</note>
    </ligand>
</feature>
<feature type="binding site" evidence="1">
    <location>
        <position position="51"/>
    </location>
    <ligand>
        <name>(6R)-5,10-methylene-5,6,7,8-tetrahydrofolate</name>
        <dbReference type="ChEBI" id="CHEBI:15636"/>
    </ligand>
</feature>
<feature type="binding site" evidence="1">
    <location>
        <begin position="126"/>
        <end position="127"/>
    </location>
    <ligand>
        <name>dUMP</name>
        <dbReference type="ChEBI" id="CHEBI:246422"/>
        <note>ligand shared between dimeric partners</note>
    </ligand>
</feature>
<feature type="binding site" description="in other chain" evidence="1">
    <location>
        <begin position="166"/>
        <end position="169"/>
    </location>
    <ligand>
        <name>dUMP</name>
        <dbReference type="ChEBI" id="CHEBI:246422"/>
        <note>ligand shared between dimeric partners</note>
    </ligand>
</feature>
<feature type="binding site" evidence="1">
    <location>
        <position position="169"/>
    </location>
    <ligand>
        <name>(6R)-5,10-methylene-5,6,7,8-tetrahydrofolate</name>
        <dbReference type="ChEBI" id="CHEBI:15636"/>
    </ligand>
</feature>
<feature type="binding site" description="in other chain" evidence="1">
    <location>
        <position position="177"/>
    </location>
    <ligand>
        <name>dUMP</name>
        <dbReference type="ChEBI" id="CHEBI:246422"/>
        <note>ligand shared between dimeric partners</note>
    </ligand>
</feature>
<feature type="binding site" description="in other chain" evidence="1">
    <location>
        <begin position="207"/>
        <end position="209"/>
    </location>
    <ligand>
        <name>dUMP</name>
        <dbReference type="ChEBI" id="CHEBI:246422"/>
        <note>ligand shared between dimeric partners</note>
    </ligand>
</feature>
<feature type="binding site" evidence="1">
    <location>
        <position position="263"/>
    </location>
    <ligand>
        <name>(6R)-5,10-methylene-5,6,7,8-tetrahydrofolate</name>
        <dbReference type="ChEBI" id="CHEBI:15636"/>
    </ligand>
</feature>
<keyword id="KW-0963">Cytoplasm</keyword>
<keyword id="KW-0489">Methyltransferase</keyword>
<keyword id="KW-0545">Nucleotide biosynthesis</keyword>
<keyword id="KW-1185">Reference proteome</keyword>
<keyword id="KW-0808">Transferase</keyword>
<sequence>MKQYLELLNRVLTEGVRKEDRTGTGTISVFGHQMRFNLEEGFPLLTTKKLHLKSIIYELLWFLNGDTNVKYLQDHGVRIWNEWADADGSLGHIYGYQWRSWPDYKGGSIDQITEAVETIKHNPDSRRIIVSAWNVADLDNMNLPPCHAFFQFYVANGRLSLQLYQRSADIFLGVPFNIASYALLLQMMAQATGLKAGDFVHTLGDAHIYSNHLEQVKLQLTREPRALPRMEINPDVKSIFDFKFEDFNLTGYDPHPHIKGEVAV</sequence>
<comment type="function">
    <text evidence="1">Catalyzes the reductive methylation of 2'-deoxyuridine-5'-monophosphate (dUMP) to 2'-deoxythymidine-5'-monophosphate (dTMP) while utilizing 5,10-methylenetetrahydrofolate (mTHF) as the methyl donor and reductant in the reaction, yielding dihydrofolate (DHF) as a by-product. This enzymatic reaction provides an intracellular de novo source of dTMP, an essential precursor for DNA biosynthesis.</text>
</comment>
<comment type="catalytic activity">
    <reaction evidence="1">
        <text>dUMP + (6R)-5,10-methylene-5,6,7,8-tetrahydrofolate = 7,8-dihydrofolate + dTMP</text>
        <dbReference type="Rhea" id="RHEA:12104"/>
        <dbReference type="ChEBI" id="CHEBI:15636"/>
        <dbReference type="ChEBI" id="CHEBI:57451"/>
        <dbReference type="ChEBI" id="CHEBI:63528"/>
        <dbReference type="ChEBI" id="CHEBI:246422"/>
        <dbReference type="EC" id="2.1.1.45"/>
    </reaction>
</comment>
<comment type="pathway">
    <text evidence="1">Pyrimidine metabolism; dTTP biosynthesis.</text>
</comment>
<comment type="subunit">
    <text evidence="1">Homodimer.</text>
</comment>
<comment type="subcellular location">
    <subcellularLocation>
        <location evidence="1">Cytoplasm</location>
    </subcellularLocation>
</comment>
<comment type="similarity">
    <text evidence="1">Belongs to the thymidylate synthase family. Bacterial-type ThyA subfamily.</text>
</comment>
<name>TYSY_PARD8</name>
<proteinExistence type="inferred from homology"/>
<evidence type="ECO:0000255" key="1">
    <source>
        <dbReference type="HAMAP-Rule" id="MF_00008"/>
    </source>
</evidence>
<accession>A6LIC2</accession>
<organism>
    <name type="scientific">Parabacteroides distasonis (strain ATCC 8503 / DSM 20701 / CIP 104284 / JCM 5825 / NCTC 11152)</name>
    <dbReference type="NCBI Taxonomy" id="435591"/>
    <lineage>
        <taxon>Bacteria</taxon>
        <taxon>Pseudomonadati</taxon>
        <taxon>Bacteroidota</taxon>
        <taxon>Bacteroidia</taxon>
        <taxon>Bacteroidales</taxon>
        <taxon>Tannerellaceae</taxon>
        <taxon>Parabacteroides</taxon>
    </lineage>
</organism>
<dbReference type="EC" id="2.1.1.45" evidence="1"/>
<dbReference type="EMBL" id="CP000140">
    <property type="protein sequence ID" value="ABR45436.1"/>
    <property type="molecule type" value="Genomic_DNA"/>
</dbReference>
<dbReference type="RefSeq" id="WP_005858887.1">
    <property type="nucleotide sequence ID" value="NZ_LR215978.1"/>
</dbReference>
<dbReference type="SMR" id="A6LIC2"/>
<dbReference type="STRING" id="435591.BDI_3749"/>
<dbReference type="PaxDb" id="435591-BDI_3749"/>
<dbReference type="KEGG" id="pdi:BDI_3749"/>
<dbReference type="eggNOG" id="COG0207">
    <property type="taxonomic scope" value="Bacteria"/>
</dbReference>
<dbReference type="HOGENOM" id="CLU_021669_0_0_10"/>
<dbReference type="BioCyc" id="PDIS435591:G1G5A-3844-MONOMER"/>
<dbReference type="UniPathway" id="UPA00575"/>
<dbReference type="Proteomes" id="UP000000566">
    <property type="component" value="Chromosome"/>
</dbReference>
<dbReference type="GO" id="GO:0005829">
    <property type="term" value="C:cytosol"/>
    <property type="evidence" value="ECO:0007669"/>
    <property type="project" value="TreeGrafter"/>
</dbReference>
<dbReference type="GO" id="GO:0004799">
    <property type="term" value="F:thymidylate synthase activity"/>
    <property type="evidence" value="ECO:0007669"/>
    <property type="project" value="UniProtKB-UniRule"/>
</dbReference>
<dbReference type="GO" id="GO:0006231">
    <property type="term" value="P:dTMP biosynthetic process"/>
    <property type="evidence" value="ECO:0007669"/>
    <property type="project" value="UniProtKB-UniRule"/>
</dbReference>
<dbReference type="GO" id="GO:0006235">
    <property type="term" value="P:dTTP biosynthetic process"/>
    <property type="evidence" value="ECO:0007669"/>
    <property type="project" value="UniProtKB-UniRule"/>
</dbReference>
<dbReference type="GO" id="GO:0032259">
    <property type="term" value="P:methylation"/>
    <property type="evidence" value="ECO:0007669"/>
    <property type="project" value="UniProtKB-KW"/>
</dbReference>
<dbReference type="CDD" id="cd00351">
    <property type="entry name" value="TS_Pyrimidine_HMase"/>
    <property type="match status" value="1"/>
</dbReference>
<dbReference type="FunFam" id="3.30.572.10:FF:000001">
    <property type="entry name" value="Thymidylate synthase"/>
    <property type="match status" value="1"/>
</dbReference>
<dbReference type="Gene3D" id="3.30.572.10">
    <property type="entry name" value="Thymidylate synthase/dCMP hydroxymethylase domain"/>
    <property type="match status" value="1"/>
</dbReference>
<dbReference type="HAMAP" id="MF_00008">
    <property type="entry name" value="Thymidy_synth_bact"/>
    <property type="match status" value="1"/>
</dbReference>
<dbReference type="InterPro" id="IPR045097">
    <property type="entry name" value="Thymidate_synth/dCMP_Mease"/>
</dbReference>
<dbReference type="InterPro" id="IPR023451">
    <property type="entry name" value="Thymidate_synth/dCMP_Mease_dom"/>
</dbReference>
<dbReference type="InterPro" id="IPR036926">
    <property type="entry name" value="Thymidate_synth/dCMP_Mease_sf"/>
</dbReference>
<dbReference type="InterPro" id="IPR000398">
    <property type="entry name" value="Thymidylate_synthase"/>
</dbReference>
<dbReference type="InterPro" id="IPR020940">
    <property type="entry name" value="Thymidylate_synthase_AS"/>
</dbReference>
<dbReference type="NCBIfam" id="NF002497">
    <property type="entry name" value="PRK01827.1-3"/>
    <property type="match status" value="1"/>
</dbReference>
<dbReference type="NCBIfam" id="NF002499">
    <property type="entry name" value="PRK01827.1-5"/>
    <property type="match status" value="1"/>
</dbReference>
<dbReference type="NCBIfam" id="TIGR03284">
    <property type="entry name" value="thym_sym"/>
    <property type="match status" value="2"/>
</dbReference>
<dbReference type="PANTHER" id="PTHR11548:SF9">
    <property type="entry name" value="THYMIDYLATE SYNTHASE"/>
    <property type="match status" value="1"/>
</dbReference>
<dbReference type="PANTHER" id="PTHR11548">
    <property type="entry name" value="THYMIDYLATE SYNTHASE 1"/>
    <property type="match status" value="1"/>
</dbReference>
<dbReference type="Pfam" id="PF00303">
    <property type="entry name" value="Thymidylat_synt"/>
    <property type="match status" value="1"/>
</dbReference>
<dbReference type="PRINTS" id="PR00108">
    <property type="entry name" value="THYMDSNTHASE"/>
</dbReference>
<dbReference type="SUPFAM" id="SSF55831">
    <property type="entry name" value="Thymidylate synthase/dCMP hydroxymethylase"/>
    <property type="match status" value="1"/>
</dbReference>
<dbReference type="PROSITE" id="PS00091">
    <property type="entry name" value="THYMIDYLATE_SYNTHASE"/>
    <property type="match status" value="1"/>
</dbReference>
<protein>
    <recommendedName>
        <fullName evidence="1">Thymidylate synthase</fullName>
        <shortName evidence="1">TS</shortName>
        <shortName evidence="1">TSase</shortName>
        <ecNumber evidence="1">2.1.1.45</ecNumber>
    </recommendedName>
</protein>